<name>WHIA_CLONN</name>
<feature type="chain" id="PRO_0000376465" description="Probable cell division protein WhiA">
    <location>
        <begin position="1"/>
        <end position="317"/>
    </location>
</feature>
<feature type="DNA-binding region" description="H-T-H motif" evidence="1">
    <location>
        <begin position="281"/>
        <end position="314"/>
    </location>
</feature>
<keyword id="KW-0131">Cell cycle</keyword>
<keyword id="KW-0132">Cell division</keyword>
<keyword id="KW-0238">DNA-binding</keyword>
<keyword id="KW-1185">Reference proteome</keyword>
<accession>A0PYB7</accession>
<protein>
    <recommendedName>
        <fullName evidence="1">Probable cell division protein WhiA</fullName>
    </recommendedName>
</protein>
<evidence type="ECO:0000255" key="1">
    <source>
        <dbReference type="HAMAP-Rule" id="MF_01420"/>
    </source>
</evidence>
<proteinExistence type="inferred from homology"/>
<dbReference type="EMBL" id="CP000382">
    <property type="protein sequence ID" value="ABK60548.1"/>
    <property type="molecule type" value="Genomic_DNA"/>
</dbReference>
<dbReference type="RefSeq" id="WP_011721377.1">
    <property type="nucleotide sequence ID" value="NC_008593.1"/>
</dbReference>
<dbReference type="SMR" id="A0PYB7"/>
<dbReference type="STRING" id="386415.NT01CX_1286"/>
<dbReference type="KEGG" id="cno:NT01CX_1286"/>
<dbReference type="eggNOG" id="COG1481">
    <property type="taxonomic scope" value="Bacteria"/>
</dbReference>
<dbReference type="HOGENOM" id="CLU_053282_0_0_9"/>
<dbReference type="Proteomes" id="UP000008220">
    <property type="component" value="Chromosome"/>
</dbReference>
<dbReference type="GO" id="GO:0003677">
    <property type="term" value="F:DNA binding"/>
    <property type="evidence" value="ECO:0007669"/>
    <property type="project" value="UniProtKB-UniRule"/>
</dbReference>
<dbReference type="GO" id="GO:0004519">
    <property type="term" value="F:endonuclease activity"/>
    <property type="evidence" value="ECO:0007669"/>
    <property type="project" value="InterPro"/>
</dbReference>
<dbReference type="GO" id="GO:0051301">
    <property type="term" value="P:cell division"/>
    <property type="evidence" value="ECO:0007669"/>
    <property type="project" value="UniProtKB-UniRule"/>
</dbReference>
<dbReference type="GO" id="GO:0043937">
    <property type="term" value="P:regulation of sporulation"/>
    <property type="evidence" value="ECO:0007669"/>
    <property type="project" value="InterPro"/>
</dbReference>
<dbReference type="Gene3D" id="3.10.28.10">
    <property type="entry name" value="Homing endonucleases"/>
    <property type="match status" value="1"/>
</dbReference>
<dbReference type="HAMAP" id="MF_01420">
    <property type="entry name" value="HTH_type_WhiA"/>
    <property type="match status" value="1"/>
</dbReference>
<dbReference type="InterPro" id="IPR027434">
    <property type="entry name" value="Homing_endonucl"/>
</dbReference>
<dbReference type="InterPro" id="IPR004042">
    <property type="entry name" value="Intein_endonuc_central"/>
</dbReference>
<dbReference type="InterPro" id="IPR018478">
    <property type="entry name" value="Sporu_reg_WhiA_N_dom"/>
</dbReference>
<dbReference type="InterPro" id="IPR003802">
    <property type="entry name" value="Sporulation_regulator_WhiA"/>
</dbReference>
<dbReference type="InterPro" id="IPR023054">
    <property type="entry name" value="Sporulation_regulator_WhiA_C"/>
</dbReference>
<dbReference type="InterPro" id="IPR039518">
    <property type="entry name" value="WhiA_LAGLIDADG_dom"/>
</dbReference>
<dbReference type="NCBIfam" id="TIGR00647">
    <property type="entry name" value="DNA_bind_WhiA"/>
    <property type="match status" value="1"/>
</dbReference>
<dbReference type="PANTHER" id="PTHR37307">
    <property type="entry name" value="CELL DIVISION PROTEIN WHIA-RELATED"/>
    <property type="match status" value="1"/>
</dbReference>
<dbReference type="PANTHER" id="PTHR37307:SF1">
    <property type="entry name" value="CELL DIVISION PROTEIN WHIA-RELATED"/>
    <property type="match status" value="1"/>
</dbReference>
<dbReference type="Pfam" id="PF02650">
    <property type="entry name" value="HTH_WhiA"/>
    <property type="match status" value="1"/>
</dbReference>
<dbReference type="Pfam" id="PF14527">
    <property type="entry name" value="LAGLIDADG_WhiA"/>
    <property type="match status" value="1"/>
</dbReference>
<dbReference type="Pfam" id="PF10298">
    <property type="entry name" value="WhiA_N"/>
    <property type="match status" value="1"/>
</dbReference>
<dbReference type="SUPFAM" id="SSF55608">
    <property type="entry name" value="Homing endonucleases"/>
    <property type="match status" value="1"/>
</dbReference>
<dbReference type="PROSITE" id="PS50819">
    <property type="entry name" value="INTEIN_ENDONUCLEASE"/>
    <property type="match status" value="1"/>
</dbReference>
<gene>
    <name evidence="1" type="primary">whiA</name>
    <name type="ordered locus">NT01CX_1286</name>
</gene>
<comment type="function">
    <text evidence="1">Involved in cell division and chromosome segregation.</text>
</comment>
<comment type="similarity">
    <text evidence="1">Belongs to the WhiA family.</text>
</comment>
<reference key="1">
    <citation type="journal article" date="2006" name="Nat. Biotechnol.">
        <title>The genome and transcriptomes of the anti-tumor agent Clostridium novyi-NT.</title>
        <authorList>
            <person name="Bettegowda C."/>
            <person name="Huang X."/>
            <person name="Lin J."/>
            <person name="Cheong I."/>
            <person name="Kohli M."/>
            <person name="Szabo S.A."/>
            <person name="Zhang X."/>
            <person name="Diaz L.A. Jr."/>
            <person name="Velculescu V.E."/>
            <person name="Parmigiani G."/>
            <person name="Kinzler K.W."/>
            <person name="Vogelstein B."/>
            <person name="Zhou S."/>
        </authorList>
    </citation>
    <scope>NUCLEOTIDE SEQUENCE [LARGE SCALE GENOMIC DNA]</scope>
    <source>
        <strain>NT</strain>
    </source>
</reference>
<sequence length="317" mass="36149">MSFSSKVKNEICRYTELSREEAIAELSGIMKVSGTLGFSGDMKMNFRVSTENPAIARLTFKLLKDHFNIHTKIFVKKSNSLKKNNIYLVVIDNNMGVKDLLKEVGVLKEEEGMITLDYSVPERMVRDDNCRRVFIRGVFLGGGSISNPEKTYHLEFVTHHEDYAKELSEVINTYGLNSKVIQRKSSFVIYLKEGEQIVDLLNIIGAHDSLLELENVRIMKEMRNNVNRLVNCETANLSKTVNAAVRQIGSIKLIEEEIGLQRLPENLREVAELRLNFPNESLKELGQMLDPPVGKSGINHRLRRIEKIAEELRKEGK</sequence>
<organism>
    <name type="scientific">Clostridium novyi (strain NT)</name>
    <dbReference type="NCBI Taxonomy" id="386415"/>
    <lineage>
        <taxon>Bacteria</taxon>
        <taxon>Bacillati</taxon>
        <taxon>Bacillota</taxon>
        <taxon>Clostridia</taxon>
        <taxon>Eubacteriales</taxon>
        <taxon>Clostridiaceae</taxon>
        <taxon>Clostridium</taxon>
    </lineage>
</organism>